<accession>B0U417</accession>
<name>CH10_XYLFM</name>
<dbReference type="EMBL" id="CP000941">
    <property type="protein sequence ID" value="ACA12596.1"/>
    <property type="molecule type" value="Genomic_DNA"/>
</dbReference>
<dbReference type="RefSeq" id="WP_004083507.1">
    <property type="nucleotide sequence ID" value="NC_010513.1"/>
</dbReference>
<dbReference type="SMR" id="B0U417"/>
<dbReference type="KEGG" id="xfm:Xfasm12_1692"/>
<dbReference type="HOGENOM" id="CLU_132825_2_0_6"/>
<dbReference type="GO" id="GO:0005737">
    <property type="term" value="C:cytoplasm"/>
    <property type="evidence" value="ECO:0007669"/>
    <property type="project" value="UniProtKB-SubCell"/>
</dbReference>
<dbReference type="GO" id="GO:0005524">
    <property type="term" value="F:ATP binding"/>
    <property type="evidence" value="ECO:0007669"/>
    <property type="project" value="InterPro"/>
</dbReference>
<dbReference type="GO" id="GO:0046872">
    <property type="term" value="F:metal ion binding"/>
    <property type="evidence" value="ECO:0007669"/>
    <property type="project" value="TreeGrafter"/>
</dbReference>
<dbReference type="GO" id="GO:0044183">
    <property type="term" value="F:protein folding chaperone"/>
    <property type="evidence" value="ECO:0007669"/>
    <property type="project" value="InterPro"/>
</dbReference>
<dbReference type="GO" id="GO:0051087">
    <property type="term" value="F:protein-folding chaperone binding"/>
    <property type="evidence" value="ECO:0007669"/>
    <property type="project" value="TreeGrafter"/>
</dbReference>
<dbReference type="GO" id="GO:0051082">
    <property type="term" value="F:unfolded protein binding"/>
    <property type="evidence" value="ECO:0007669"/>
    <property type="project" value="TreeGrafter"/>
</dbReference>
<dbReference type="GO" id="GO:0051085">
    <property type="term" value="P:chaperone cofactor-dependent protein refolding"/>
    <property type="evidence" value="ECO:0007669"/>
    <property type="project" value="TreeGrafter"/>
</dbReference>
<dbReference type="CDD" id="cd00320">
    <property type="entry name" value="cpn10"/>
    <property type="match status" value="1"/>
</dbReference>
<dbReference type="FunFam" id="2.30.33.40:FF:000001">
    <property type="entry name" value="10 kDa chaperonin"/>
    <property type="match status" value="1"/>
</dbReference>
<dbReference type="Gene3D" id="2.30.33.40">
    <property type="entry name" value="GroES chaperonin"/>
    <property type="match status" value="1"/>
</dbReference>
<dbReference type="HAMAP" id="MF_00580">
    <property type="entry name" value="CH10"/>
    <property type="match status" value="1"/>
</dbReference>
<dbReference type="InterPro" id="IPR020818">
    <property type="entry name" value="Chaperonin_GroES"/>
</dbReference>
<dbReference type="InterPro" id="IPR037124">
    <property type="entry name" value="Chaperonin_GroES_sf"/>
</dbReference>
<dbReference type="InterPro" id="IPR018369">
    <property type="entry name" value="Chaprnonin_Cpn10_CS"/>
</dbReference>
<dbReference type="InterPro" id="IPR011032">
    <property type="entry name" value="GroES-like_sf"/>
</dbReference>
<dbReference type="NCBIfam" id="NF001527">
    <property type="entry name" value="PRK00364.1-2"/>
    <property type="match status" value="1"/>
</dbReference>
<dbReference type="NCBIfam" id="NF001531">
    <property type="entry name" value="PRK00364.2-2"/>
    <property type="match status" value="1"/>
</dbReference>
<dbReference type="NCBIfam" id="NF001533">
    <property type="entry name" value="PRK00364.2-4"/>
    <property type="match status" value="1"/>
</dbReference>
<dbReference type="PANTHER" id="PTHR10772">
    <property type="entry name" value="10 KDA HEAT SHOCK PROTEIN"/>
    <property type="match status" value="1"/>
</dbReference>
<dbReference type="PANTHER" id="PTHR10772:SF58">
    <property type="entry name" value="CO-CHAPERONIN GROES"/>
    <property type="match status" value="1"/>
</dbReference>
<dbReference type="Pfam" id="PF00166">
    <property type="entry name" value="Cpn10"/>
    <property type="match status" value="1"/>
</dbReference>
<dbReference type="PRINTS" id="PR00297">
    <property type="entry name" value="CHAPERONIN10"/>
</dbReference>
<dbReference type="SMART" id="SM00883">
    <property type="entry name" value="Cpn10"/>
    <property type="match status" value="1"/>
</dbReference>
<dbReference type="SUPFAM" id="SSF50129">
    <property type="entry name" value="GroES-like"/>
    <property type="match status" value="1"/>
</dbReference>
<dbReference type="PROSITE" id="PS00681">
    <property type="entry name" value="CHAPERONINS_CPN10"/>
    <property type="match status" value="1"/>
</dbReference>
<protein>
    <recommendedName>
        <fullName evidence="1">Co-chaperonin GroES</fullName>
    </recommendedName>
    <alternativeName>
        <fullName evidence="1">10 kDa chaperonin</fullName>
    </alternativeName>
    <alternativeName>
        <fullName evidence="1">Chaperonin-10</fullName>
        <shortName evidence="1">Cpn10</shortName>
    </alternativeName>
</protein>
<evidence type="ECO:0000255" key="1">
    <source>
        <dbReference type="HAMAP-Rule" id="MF_00580"/>
    </source>
</evidence>
<gene>
    <name evidence="1" type="primary">groES</name>
    <name evidence="1" type="synonym">groS</name>
    <name type="ordered locus">Xfasm12_1692</name>
</gene>
<comment type="function">
    <text evidence="1">Together with the chaperonin GroEL, plays an essential role in assisting protein folding. The GroEL-GroES system forms a nano-cage that allows encapsulation of the non-native substrate proteins and provides a physical environment optimized to promote and accelerate protein folding. GroES binds to the apical surface of the GroEL ring, thereby capping the opening of the GroEL channel.</text>
</comment>
<comment type="subunit">
    <text evidence="1">Heptamer of 7 subunits arranged in a ring. Interacts with the chaperonin GroEL.</text>
</comment>
<comment type="subcellular location">
    <subcellularLocation>
        <location evidence="1">Cytoplasm</location>
    </subcellularLocation>
</comment>
<comment type="similarity">
    <text evidence="1">Belongs to the GroES chaperonin family.</text>
</comment>
<organism>
    <name type="scientific">Xylella fastidiosa (strain M12)</name>
    <dbReference type="NCBI Taxonomy" id="405440"/>
    <lineage>
        <taxon>Bacteria</taxon>
        <taxon>Pseudomonadati</taxon>
        <taxon>Pseudomonadota</taxon>
        <taxon>Gammaproteobacteria</taxon>
        <taxon>Lysobacterales</taxon>
        <taxon>Lysobacteraceae</taxon>
        <taxon>Xylella</taxon>
    </lineage>
</organism>
<proteinExistence type="inferred from homology"/>
<keyword id="KW-0143">Chaperone</keyword>
<keyword id="KW-0963">Cytoplasm</keyword>
<feature type="chain" id="PRO_1000129728" description="Co-chaperonin GroES">
    <location>
        <begin position="1"/>
        <end position="95"/>
    </location>
</feature>
<reference key="1">
    <citation type="journal article" date="2010" name="J. Bacteriol.">
        <title>Whole genome sequences of two Xylella fastidiosa strains (M12 and M23) causing almond leaf scorch disease in California.</title>
        <authorList>
            <person name="Chen J."/>
            <person name="Xie G."/>
            <person name="Han S."/>
            <person name="Chertkov O."/>
            <person name="Sims D."/>
            <person name="Civerolo E.L."/>
        </authorList>
    </citation>
    <scope>NUCLEOTIDE SEQUENCE [LARGE SCALE GENOMIC DNA]</scope>
    <source>
        <strain>M12</strain>
    </source>
</reference>
<sequence length="95" mass="10107">MSIKPLHDRIVVKPIEADEVSPGGIVIPDSAKEKSTKGEVIAVGTGKPLDNGNVRTPSIKVGDKVIYGQYAGSTYKAEGVEYKVLREDDILAIIG</sequence>